<feature type="chain" id="PRO_0000230884" description="Transcriptional repressor NrdR">
    <location>
        <begin position="1"/>
        <end position="154"/>
    </location>
</feature>
<feature type="domain" description="ATP-cone" evidence="1">
    <location>
        <begin position="49"/>
        <end position="139"/>
    </location>
</feature>
<feature type="zinc finger region" evidence="1">
    <location>
        <begin position="3"/>
        <end position="34"/>
    </location>
</feature>
<protein>
    <recommendedName>
        <fullName evidence="1">Transcriptional repressor NrdR</fullName>
    </recommendedName>
</protein>
<gene>
    <name evidence="1" type="primary">nrdR</name>
    <name type="ordered locus">Psyr_4463</name>
</gene>
<accession>Q4ZMX9</accession>
<organism>
    <name type="scientific">Pseudomonas syringae pv. syringae (strain B728a)</name>
    <dbReference type="NCBI Taxonomy" id="205918"/>
    <lineage>
        <taxon>Bacteria</taxon>
        <taxon>Pseudomonadati</taxon>
        <taxon>Pseudomonadota</taxon>
        <taxon>Gammaproteobacteria</taxon>
        <taxon>Pseudomonadales</taxon>
        <taxon>Pseudomonadaceae</taxon>
        <taxon>Pseudomonas</taxon>
        <taxon>Pseudomonas syringae</taxon>
    </lineage>
</organism>
<sequence>MHCPFCGANDTKVIDSRLVAEGEQVRRRRECLACGERFTTFETAELVLPRLIKQDGSRQPFDEEKLRAGMQRALEKRPVSVERLEAALVHIKHKLRATGEREVKSLVVGELVMTELQKLDEVAYIRFASVYRRFQDLNEFREEIDRLAREPGKE</sequence>
<dbReference type="EMBL" id="CP000075">
    <property type="protein sequence ID" value="AAY39493.1"/>
    <property type="status" value="ALT_INIT"/>
    <property type="molecule type" value="Genomic_DNA"/>
</dbReference>
<dbReference type="RefSeq" id="WP_003317051.1">
    <property type="nucleotide sequence ID" value="NC_007005.1"/>
</dbReference>
<dbReference type="RefSeq" id="YP_237531.2">
    <property type="nucleotide sequence ID" value="NC_007005.1"/>
</dbReference>
<dbReference type="SMR" id="Q4ZMX9"/>
<dbReference type="STRING" id="205918.Psyr_4463"/>
<dbReference type="GeneID" id="96220968"/>
<dbReference type="KEGG" id="psb:Psyr_4463"/>
<dbReference type="PATRIC" id="fig|205918.7.peg.4604"/>
<dbReference type="eggNOG" id="COG1327">
    <property type="taxonomic scope" value="Bacteria"/>
</dbReference>
<dbReference type="HOGENOM" id="CLU_108412_0_0_6"/>
<dbReference type="OrthoDB" id="9807461at2"/>
<dbReference type="Proteomes" id="UP000000426">
    <property type="component" value="Chromosome"/>
</dbReference>
<dbReference type="GO" id="GO:0005524">
    <property type="term" value="F:ATP binding"/>
    <property type="evidence" value="ECO:0007669"/>
    <property type="project" value="UniProtKB-KW"/>
</dbReference>
<dbReference type="GO" id="GO:0003677">
    <property type="term" value="F:DNA binding"/>
    <property type="evidence" value="ECO:0007669"/>
    <property type="project" value="UniProtKB-KW"/>
</dbReference>
<dbReference type="GO" id="GO:0008270">
    <property type="term" value="F:zinc ion binding"/>
    <property type="evidence" value="ECO:0007669"/>
    <property type="project" value="UniProtKB-UniRule"/>
</dbReference>
<dbReference type="GO" id="GO:0045892">
    <property type="term" value="P:negative regulation of DNA-templated transcription"/>
    <property type="evidence" value="ECO:0007669"/>
    <property type="project" value="UniProtKB-UniRule"/>
</dbReference>
<dbReference type="HAMAP" id="MF_00440">
    <property type="entry name" value="NrdR"/>
    <property type="match status" value="1"/>
</dbReference>
<dbReference type="InterPro" id="IPR005144">
    <property type="entry name" value="ATP-cone_dom"/>
</dbReference>
<dbReference type="InterPro" id="IPR055173">
    <property type="entry name" value="NrdR-like_N"/>
</dbReference>
<dbReference type="InterPro" id="IPR003796">
    <property type="entry name" value="RNR_NrdR-like"/>
</dbReference>
<dbReference type="NCBIfam" id="TIGR00244">
    <property type="entry name" value="transcriptional regulator NrdR"/>
    <property type="match status" value="1"/>
</dbReference>
<dbReference type="PANTHER" id="PTHR30455">
    <property type="entry name" value="TRANSCRIPTIONAL REPRESSOR NRDR"/>
    <property type="match status" value="1"/>
</dbReference>
<dbReference type="PANTHER" id="PTHR30455:SF2">
    <property type="entry name" value="TRANSCRIPTIONAL REPRESSOR NRDR"/>
    <property type="match status" value="1"/>
</dbReference>
<dbReference type="Pfam" id="PF03477">
    <property type="entry name" value="ATP-cone"/>
    <property type="match status" value="1"/>
</dbReference>
<dbReference type="Pfam" id="PF22811">
    <property type="entry name" value="Zn_ribbon_NrdR"/>
    <property type="match status" value="1"/>
</dbReference>
<dbReference type="PROSITE" id="PS51161">
    <property type="entry name" value="ATP_CONE"/>
    <property type="match status" value="1"/>
</dbReference>
<proteinExistence type="inferred from homology"/>
<keyword id="KW-0067">ATP-binding</keyword>
<keyword id="KW-0238">DNA-binding</keyword>
<keyword id="KW-0479">Metal-binding</keyword>
<keyword id="KW-0547">Nucleotide-binding</keyword>
<keyword id="KW-0678">Repressor</keyword>
<keyword id="KW-0804">Transcription</keyword>
<keyword id="KW-0805">Transcription regulation</keyword>
<keyword id="KW-0862">Zinc</keyword>
<keyword id="KW-0863">Zinc-finger</keyword>
<reference key="1">
    <citation type="journal article" date="2005" name="Proc. Natl. Acad. Sci. U.S.A.">
        <title>Comparison of the complete genome sequences of Pseudomonas syringae pv. syringae B728a and pv. tomato DC3000.</title>
        <authorList>
            <person name="Feil H."/>
            <person name="Feil W.S."/>
            <person name="Chain P."/>
            <person name="Larimer F."/>
            <person name="Dibartolo G."/>
            <person name="Copeland A."/>
            <person name="Lykidis A."/>
            <person name="Trong S."/>
            <person name="Nolan M."/>
            <person name="Goltsman E."/>
            <person name="Thiel J."/>
            <person name="Malfatti S."/>
            <person name="Loper J.E."/>
            <person name="Lapidus A."/>
            <person name="Detter J.C."/>
            <person name="Land M."/>
            <person name="Richardson P.M."/>
            <person name="Kyrpides N.C."/>
            <person name="Ivanova N."/>
            <person name="Lindow S.E."/>
        </authorList>
    </citation>
    <scope>NUCLEOTIDE SEQUENCE [LARGE SCALE GENOMIC DNA]</scope>
    <source>
        <strain>B728a</strain>
    </source>
</reference>
<comment type="function">
    <text evidence="1">Negatively regulates transcription of bacterial ribonucleotide reductase nrd genes and operons by binding to NrdR-boxes.</text>
</comment>
<comment type="cofactor">
    <cofactor evidence="1">
        <name>Zn(2+)</name>
        <dbReference type="ChEBI" id="CHEBI:29105"/>
    </cofactor>
    <text evidence="1">Binds 1 zinc ion.</text>
</comment>
<comment type="similarity">
    <text evidence="1">Belongs to the NrdR family.</text>
</comment>
<comment type="sequence caution" evidence="2">
    <conflict type="erroneous initiation">
        <sequence resource="EMBL-CDS" id="AAY39493"/>
    </conflict>
</comment>
<name>NRDR_PSEU2</name>
<evidence type="ECO:0000255" key="1">
    <source>
        <dbReference type="HAMAP-Rule" id="MF_00440"/>
    </source>
</evidence>
<evidence type="ECO:0000305" key="2"/>